<feature type="transit peptide" description="Chloroplast" evidence="2">
    <location>
        <begin position="1"/>
        <end position="43"/>
    </location>
</feature>
<feature type="chain" id="PRO_0000029374" description="Photosystem I reaction center subunit II, chloroplastic">
    <location>
        <begin position="44"/>
        <end position="205"/>
    </location>
</feature>
<feature type="region of interest" description="Disordered" evidence="1">
    <location>
        <begin position="18"/>
        <end position="66"/>
    </location>
</feature>
<feature type="compositionally biased region" description="Low complexity" evidence="1">
    <location>
        <begin position="39"/>
        <end position="48"/>
    </location>
</feature>
<feature type="compositionally biased region" description="Pro residues" evidence="1">
    <location>
        <begin position="49"/>
        <end position="59"/>
    </location>
</feature>
<feature type="sequence conflict" description="In Ref. 2; AA sequence." evidence="3" ref="2">
    <original>G</original>
    <variation>GG</variation>
    <location>
        <position position="80"/>
    </location>
</feature>
<feature type="sequence conflict" description="In Ref. 2; AA sequence." evidence="3" ref="2">
    <original>T</original>
    <variation>G</variation>
    <location>
        <position position="82"/>
    </location>
</feature>
<feature type="sequence conflict" description="In Ref. 2; AA sequence." evidence="3" ref="2">
    <original>R</original>
    <variation>P</variation>
    <location>
        <position position="118"/>
    </location>
</feature>
<feature type="sequence conflict" description="In Ref. 2; AA sequence." evidence="3" ref="2">
    <original>S</original>
    <variation>F</variation>
    <location>
        <position position="191"/>
    </location>
</feature>
<feature type="helix" evidence="4">
    <location>
        <begin position="87"/>
        <end position="91"/>
    </location>
</feature>
<feature type="strand" evidence="4">
    <location>
        <begin position="94"/>
        <end position="96"/>
    </location>
</feature>
<feature type="strand" evidence="4">
    <location>
        <begin position="99"/>
        <end position="103"/>
    </location>
</feature>
<feature type="strand" evidence="4">
    <location>
        <begin position="106"/>
        <end position="108"/>
    </location>
</feature>
<feature type="strand" evidence="4">
    <location>
        <begin position="112"/>
        <end position="116"/>
    </location>
</feature>
<feature type="strand" evidence="4">
    <location>
        <begin position="119"/>
        <end position="121"/>
    </location>
</feature>
<feature type="strand" evidence="4">
    <location>
        <begin position="125"/>
        <end position="128"/>
    </location>
</feature>
<feature type="helix" evidence="4">
    <location>
        <begin position="129"/>
        <end position="142"/>
    </location>
</feature>
<feature type="strand" evidence="4">
    <location>
        <begin position="150"/>
        <end position="152"/>
    </location>
</feature>
<feature type="strand" evidence="4">
    <location>
        <begin position="154"/>
        <end position="156"/>
    </location>
</feature>
<feature type="strand" evidence="4">
    <location>
        <begin position="158"/>
        <end position="160"/>
    </location>
</feature>
<feature type="strand" evidence="4">
    <location>
        <begin position="162"/>
        <end position="167"/>
    </location>
</feature>
<feature type="helix" evidence="4">
    <location>
        <begin position="186"/>
        <end position="188"/>
    </location>
</feature>
<feature type="turn" evidence="4">
    <location>
        <begin position="192"/>
        <end position="197"/>
    </location>
</feature>
<name>PSAD_HORVU</name>
<protein>
    <recommendedName>
        <fullName>Photosystem I reaction center subunit II, chloroplastic</fullName>
    </recommendedName>
    <alternativeName>
        <fullName>Photosystem I 20 kDa subunit</fullName>
        <shortName>PSI-D</shortName>
    </alternativeName>
</protein>
<gene>
    <name type="primary">psaD</name>
</gene>
<sequence length="205" mass="21933">MAMATQASAATRHLITAAWSPSAKPRPATLAMPSSARGPAPLFAAAPDTPAPAAPPAEPAPAGFVPPQLDPSTPSPIFGGSTGGLLRKAQVEEFYVITWTSPKEQVFEMPTGGAAIMREGPNLLKLARKEQCLALGNRLRSKYKIAYQFYRVFPNGEVQYLHPKDGVYPEKVNAGRQGVGQNFRSIGKNVSPIEVKFTGKNSFDI</sequence>
<proteinExistence type="evidence at protein level"/>
<comment type="function">
    <text>PsaD can form complexes with ferredoxin and ferredoxin-oxidoreductase in photosystem I (PS I) reaction center. PSAD may encode the ferredoxin-docking protein.</text>
</comment>
<comment type="subcellular location">
    <subcellularLocation>
        <location>Plastid</location>
        <location>Chloroplast thylakoid membrane</location>
        <topology>Peripheral membrane protein</topology>
        <orientation>Stromal side</orientation>
    </subcellularLocation>
</comment>
<comment type="induction">
    <text>By light.</text>
</comment>
<comment type="similarity">
    <text evidence="3">Belongs to the PsaD family.</text>
</comment>
<dbReference type="EMBL" id="M98254">
    <property type="protein sequence ID" value="AAA18567.1"/>
    <property type="molecule type" value="mRNA"/>
</dbReference>
<dbReference type="PIR" id="JQ2247">
    <property type="entry name" value="JQ2247"/>
</dbReference>
<dbReference type="PDB" id="7EW6">
    <property type="method" value="EM"/>
    <property type="resolution" value="3.40 A"/>
    <property type="chains" value="D=1-205"/>
</dbReference>
<dbReference type="PDB" id="7EWK">
    <property type="method" value="EM"/>
    <property type="resolution" value="3.88 A"/>
    <property type="chains" value="D=63-204"/>
</dbReference>
<dbReference type="PDB" id="7F9O">
    <property type="method" value="EM"/>
    <property type="resolution" value="4.50 A"/>
    <property type="chains" value="D/h=1-205"/>
</dbReference>
<dbReference type="PDBsum" id="7EW6"/>
<dbReference type="PDBsum" id="7EWK"/>
<dbReference type="PDBsum" id="7F9O"/>
<dbReference type="EMDB" id="EMD-31348"/>
<dbReference type="EMDB" id="EMD-31350"/>
<dbReference type="EMDB" id="EMD-31498"/>
<dbReference type="SMR" id="P36213"/>
<dbReference type="OMA" id="TKSSAPW"/>
<dbReference type="ExpressionAtlas" id="P36213">
    <property type="expression patterns" value="baseline and differential"/>
</dbReference>
<dbReference type="GO" id="GO:0009535">
    <property type="term" value="C:chloroplast thylakoid membrane"/>
    <property type="evidence" value="ECO:0007669"/>
    <property type="project" value="UniProtKB-SubCell"/>
</dbReference>
<dbReference type="GO" id="GO:0009538">
    <property type="term" value="C:photosystem I reaction center"/>
    <property type="evidence" value="ECO:0007669"/>
    <property type="project" value="InterPro"/>
</dbReference>
<dbReference type="GO" id="GO:0015979">
    <property type="term" value="P:photosynthesis"/>
    <property type="evidence" value="ECO:0007669"/>
    <property type="project" value="UniProtKB-KW"/>
</dbReference>
<dbReference type="FunFam" id="3.30.1470.10:FF:000002">
    <property type="entry name" value="Photosystem I reaction center subunit II"/>
    <property type="match status" value="1"/>
</dbReference>
<dbReference type="Gene3D" id="3.30.1470.10">
    <property type="entry name" value="Photosystem I PsaD, reaction center subunit II"/>
    <property type="match status" value="1"/>
</dbReference>
<dbReference type="InterPro" id="IPR003685">
    <property type="entry name" value="PsaD"/>
</dbReference>
<dbReference type="InterPro" id="IPR036579">
    <property type="entry name" value="PsaD_sf"/>
</dbReference>
<dbReference type="PANTHER" id="PTHR31982:SF5">
    <property type="entry name" value="PHOTOSYSTEM I REACTION CENTER SUBUNIT II, CHLOROPLASTIC"/>
    <property type="match status" value="1"/>
</dbReference>
<dbReference type="PANTHER" id="PTHR31982">
    <property type="entry name" value="PHOTOSYSTEM I REACTION CENTER SUBUNIT II-1, CHLOROPLASTIC-RELATED"/>
    <property type="match status" value="1"/>
</dbReference>
<dbReference type="Pfam" id="PF02531">
    <property type="entry name" value="PsaD"/>
    <property type="match status" value="1"/>
</dbReference>
<dbReference type="SUPFAM" id="SSF64234">
    <property type="entry name" value="Photosystem I subunit PsaD"/>
    <property type="match status" value="1"/>
</dbReference>
<reference key="1">
    <citation type="journal article" date="1993" name="Plant Physiol.">
        <title>Cloning and sequencing of a full-length cDNA clone encoding the PSI-D subunit of photosystem I from barley.</title>
        <authorList>
            <person name="Kjaerulff S."/>
            <person name="Okkels J.S."/>
        </authorList>
    </citation>
    <scope>NUCLEOTIDE SEQUENCE [MRNA]</scope>
    <source>
        <strain>cv. Svalofs Bonus</strain>
        <tissue>Seedling</tissue>
    </source>
</reference>
<reference key="2">
    <citation type="journal article" date="1988" name="Biochim. Biophys. Acta">
        <title>Partial amino acid sequence of two nuclear-encoded photosystem I polypeptides from barley.</title>
        <authorList>
            <person name="Scheller H.V."/>
            <person name="Hoej P.B."/>
            <person name="Svendsen I."/>
            <person name="Moeller B.L."/>
        </authorList>
    </citation>
    <scope>PROTEIN SEQUENCE OF 44-82; 118-133; 156-195 AND 203-205</scope>
    <source>
        <strain>cv. Svalofs Bonus</strain>
    </source>
</reference>
<organism>
    <name type="scientific">Hordeum vulgare</name>
    <name type="common">Barley</name>
    <dbReference type="NCBI Taxonomy" id="4513"/>
    <lineage>
        <taxon>Eukaryota</taxon>
        <taxon>Viridiplantae</taxon>
        <taxon>Streptophyta</taxon>
        <taxon>Embryophyta</taxon>
        <taxon>Tracheophyta</taxon>
        <taxon>Spermatophyta</taxon>
        <taxon>Magnoliopsida</taxon>
        <taxon>Liliopsida</taxon>
        <taxon>Poales</taxon>
        <taxon>Poaceae</taxon>
        <taxon>BOP clade</taxon>
        <taxon>Pooideae</taxon>
        <taxon>Triticodae</taxon>
        <taxon>Triticeae</taxon>
        <taxon>Hordeinae</taxon>
        <taxon>Hordeum</taxon>
    </lineage>
</organism>
<accession>P36213</accession>
<evidence type="ECO:0000256" key="1">
    <source>
        <dbReference type="SAM" id="MobiDB-lite"/>
    </source>
</evidence>
<evidence type="ECO:0000269" key="2">
    <source ref="2"/>
</evidence>
<evidence type="ECO:0000305" key="3"/>
<evidence type="ECO:0007829" key="4">
    <source>
        <dbReference type="PDB" id="7EW6"/>
    </source>
</evidence>
<keyword id="KW-0002">3D-structure</keyword>
<keyword id="KW-0150">Chloroplast</keyword>
<keyword id="KW-0903">Direct protein sequencing</keyword>
<keyword id="KW-0472">Membrane</keyword>
<keyword id="KW-0602">Photosynthesis</keyword>
<keyword id="KW-0603">Photosystem I</keyword>
<keyword id="KW-0934">Plastid</keyword>
<keyword id="KW-0793">Thylakoid</keyword>
<keyword id="KW-0809">Transit peptide</keyword>